<comment type="function">
    <text evidence="1">Transfers a phosphoglycerol residue from phosphatidylglycerol to the membrane-bound nascent glucan backbones.</text>
</comment>
<comment type="catalytic activity">
    <reaction evidence="1">
        <text>a phosphatidylglycerol + a membrane-derived-oligosaccharide D-glucose = a 1,2-diacyl-sn-glycerol + a membrane-derived-oligosaccharide 6-(glycerophospho)-D-glucose.</text>
        <dbReference type="EC" id="2.7.8.20"/>
    </reaction>
</comment>
<comment type="pathway">
    <text evidence="1">Glycan metabolism; osmoregulated periplasmic glucan (OPG) biosynthesis.</text>
</comment>
<comment type="subcellular location">
    <subcellularLocation>
        <location evidence="1">Cell inner membrane</location>
        <topology evidence="1">Multi-pass membrane protein</topology>
    </subcellularLocation>
</comment>
<comment type="similarity">
    <text evidence="1">Belongs to the OpgB family.</text>
</comment>
<comment type="sequence caution" evidence="2">
    <conflict type="erroneous initiation">
        <sequence resource="EMBL-CDS" id="AAM35312"/>
    </conflict>
</comment>
<sequence length="702" mass="77642">MHWMLLVSLLLLLWLLVASPRLAWLKAGLLSLFLLLLSAWGLVDRLSGDGINAATLYHLRADMDGAGVSDFSGYIAVFVGMLLLSLSPLLLVRIRRFQRPRGGGAVFAGFVGMLLVGIAASPLYRDGKRLYYQLRPVDYATVVPEYQVPQQPLHKRKNIVWIYGESLERTYFDEQVFPGLMPNLRAVATEAVDVRNLASTEGSGWTIAGMVASMCGVPLTTAPGDENSMDRMGMFLPEARCLGDYLKDQGYRNHYVGGADASFAGKGRFLSSHGFDVVHDVHYFQDQGVAPKHFSAWGVHDDVLLDDAWDTFQTLSRAGQPFLLTTLTMDTHHPAGHLPSACKGQQYDSPLGDIGLLHAIKCSDRLIGELVARIRNSRYGKNTIIVIASDHLAMPNDLSDVLAKQKRENLLLFLGEDIAPQQVVTRAGSTLDSGATLLQLLEPGMRTLGFGRSFLASDAPPSASAAASRDSGKDYPRYLAYARTLWTGRSTRMLRINGNGDVVVGVQQVRPPVLLEYDKDTNLKTVYLENTSRQFDRTHSKGTLAYVDRCTAFEDGSADGDWCALVVDRHQSMKLYRDPDLARGIAIDAPLEATQQGPRPRVRQPIMLTQAARKTDAGRYMLELYAKRRPTRAFWVEAVSSERKVVLAQQWVVPDAAGRIRMPVGLEHAVEDLEIRAWLDYTEDVSVDDLALVKDIPVADRS</sequence>
<proteinExistence type="inferred from homology"/>
<dbReference type="EC" id="2.7.8.20" evidence="1"/>
<dbReference type="EMBL" id="AE008923">
    <property type="protein sequence ID" value="AAM35312.1"/>
    <property type="status" value="ALT_INIT"/>
    <property type="molecule type" value="Genomic_DNA"/>
</dbReference>
<dbReference type="RefSeq" id="WP_011050307.1">
    <property type="nucleotide sequence ID" value="NC_003919.1"/>
</dbReference>
<dbReference type="SMR" id="Q8PQA7"/>
<dbReference type="KEGG" id="xac:XAC0421"/>
<dbReference type="eggNOG" id="COG1368">
    <property type="taxonomic scope" value="Bacteria"/>
</dbReference>
<dbReference type="HOGENOM" id="CLU_390221_0_0_6"/>
<dbReference type="UniPathway" id="UPA00637"/>
<dbReference type="Proteomes" id="UP000000576">
    <property type="component" value="Chromosome"/>
</dbReference>
<dbReference type="GO" id="GO:0005886">
    <property type="term" value="C:plasma membrane"/>
    <property type="evidence" value="ECO:0007669"/>
    <property type="project" value="UniProtKB-SubCell"/>
</dbReference>
<dbReference type="GO" id="GO:0008960">
    <property type="term" value="F:phosphatidylglycerol-membrane-oligosaccharide glycerophosphotransferase activity"/>
    <property type="evidence" value="ECO:0007669"/>
    <property type="project" value="UniProtKB-UniRule"/>
</dbReference>
<dbReference type="GO" id="GO:0009250">
    <property type="term" value="P:glucan biosynthetic process"/>
    <property type="evidence" value="ECO:0007669"/>
    <property type="project" value="UniProtKB-UniRule"/>
</dbReference>
<dbReference type="CDD" id="cd16015">
    <property type="entry name" value="LTA_synthase"/>
    <property type="match status" value="1"/>
</dbReference>
<dbReference type="Gene3D" id="3.40.720.10">
    <property type="entry name" value="Alkaline Phosphatase, subunit A"/>
    <property type="match status" value="1"/>
</dbReference>
<dbReference type="HAMAP" id="MF_01070">
    <property type="entry name" value="MdoB_OpgB"/>
    <property type="match status" value="1"/>
</dbReference>
<dbReference type="InterPro" id="IPR017850">
    <property type="entry name" value="Alkaline_phosphatase_core_sf"/>
</dbReference>
<dbReference type="InterPro" id="IPR020881">
    <property type="entry name" value="OpgB"/>
</dbReference>
<dbReference type="InterPro" id="IPR050448">
    <property type="entry name" value="OpgB/LTA_synthase_biosynth"/>
</dbReference>
<dbReference type="InterPro" id="IPR000917">
    <property type="entry name" value="Sulfatase_N"/>
</dbReference>
<dbReference type="NCBIfam" id="NF009027">
    <property type="entry name" value="PRK12363.1"/>
    <property type="match status" value="1"/>
</dbReference>
<dbReference type="PANTHER" id="PTHR47371">
    <property type="entry name" value="LIPOTEICHOIC ACID SYNTHASE"/>
    <property type="match status" value="1"/>
</dbReference>
<dbReference type="PANTHER" id="PTHR47371:SF3">
    <property type="entry name" value="PHOSPHOGLYCEROL TRANSFERASE I"/>
    <property type="match status" value="1"/>
</dbReference>
<dbReference type="Pfam" id="PF00884">
    <property type="entry name" value="Sulfatase"/>
    <property type="match status" value="1"/>
</dbReference>
<dbReference type="SUPFAM" id="SSF53649">
    <property type="entry name" value="Alkaline phosphatase-like"/>
    <property type="match status" value="1"/>
</dbReference>
<organism>
    <name type="scientific">Xanthomonas axonopodis pv. citri (strain 306)</name>
    <dbReference type="NCBI Taxonomy" id="190486"/>
    <lineage>
        <taxon>Bacteria</taxon>
        <taxon>Pseudomonadati</taxon>
        <taxon>Pseudomonadota</taxon>
        <taxon>Gammaproteobacteria</taxon>
        <taxon>Lysobacterales</taxon>
        <taxon>Lysobacteraceae</taxon>
        <taxon>Xanthomonas</taxon>
    </lineage>
</organism>
<feature type="chain" id="PRO_0000213065" description="Phosphoglycerol transferase I">
    <location>
        <begin position="1"/>
        <end position="702"/>
    </location>
</feature>
<feature type="transmembrane region" description="Helical" evidence="1">
    <location>
        <begin position="5"/>
        <end position="24"/>
    </location>
</feature>
<feature type="transmembrane region" description="Helical" evidence="1">
    <location>
        <begin position="73"/>
        <end position="95"/>
    </location>
</feature>
<feature type="transmembrane region" description="Helical" evidence="1">
    <location>
        <begin position="102"/>
        <end position="124"/>
    </location>
</feature>
<name>OPGB_XANAC</name>
<keyword id="KW-0997">Cell inner membrane</keyword>
<keyword id="KW-1003">Cell membrane</keyword>
<keyword id="KW-0472">Membrane</keyword>
<keyword id="KW-0808">Transferase</keyword>
<keyword id="KW-0812">Transmembrane</keyword>
<keyword id="KW-1133">Transmembrane helix</keyword>
<evidence type="ECO:0000255" key="1">
    <source>
        <dbReference type="HAMAP-Rule" id="MF_01070"/>
    </source>
</evidence>
<evidence type="ECO:0000305" key="2"/>
<reference key="1">
    <citation type="journal article" date="2002" name="Nature">
        <title>Comparison of the genomes of two Xanthomonas pathogens with differing host specificities.</title>
        <authorList>
            <person name="da Silva A.C.R."/>
            <person name="Ferro J.A."/>
            <person name="Reinach F.C."/>
            <person name="Farah C.S."/>
            <person name="Furlan L.R."/>
            <person name="Quaggio R.B."/>
            <person name="Monteiro-Vitorello C.B."/>
            <person name="Van Sluys M.A."/>
            <person name="Almeida N.F. Jr."/>
            <person name="Alves L.M.C."/>
            <person name="do Amaral A.M."/>
            <person name="Bertolini M.C."/>
            <person name="Camargo L.E.A."/>
            <person name="Camarotte G."/>
            <person name="Cannavan F."/>
            <person name="Cardozo J."/>
            <person name="Chambergo F."/>
            <person name="Ciapina L.P."/>
            <person name="Cicarelli R.M.B."/>
            <person name="Coutinho L.L."/>
            <person name="Cursino-Santos J.R."/>
            <person name="El-Dorry H."/>
            <person name="Faria J.B."/>
            <person name="Ferreira A.J.S."/>
            <person name="Ferreira R.C.C."/>
            <person name="Ferro M.I.T."/>
            <person name="Formighieri E.F."/>
            <person name="Franco M.C."/>
            <person name="Greggio C.C."/>
            <person name="Gruber A."/>
            <person name="Katsuyama A.M."/>
            <person name="Kishi L.T."/>
            <person name="Leite R.P."/>
            <person name="Lemos E.G.M."/>
            <person name="Lemos M.V.F."/>
            <person name="Locali E.C."/>
            <person name="Machado M.A."/>
            <person name="Madeira A.M.B.N."/>
            <person name="Martinez-Rossi N.M."/>
            <person name="Martins E.C."/>
            <person name="Meidanis J."/>
            <person name="Menck C.F.M."/>
            <person name="Miyaki C.Y."/>
            <person name="Moon D.H."/>
            <person name="Moreira L.M."/>
            <person name="Novo M.T.M."/>
            <person name="Okura V.K."/>
            <person name="Oliveira M.C."/>
            <person name="Oliveira V.R."/>
            <person name="Pereira H.A."/>
            <person name="Rossi A."/>
            <person name="Sena J.A.D."/>
            <person name="Silva C."/>
            <person name="de Souza R.F."/>
            <person name="Spinola L.A.F."/>
            <person name="Takita M.A."/>
            <person name="Tamura R.E."/>
            <person name="Teixeira E.C."/>
            <person name="Tezza R.I.D."/>
            <person name="Trindade dos Santos M."/>
            <person name="Truffi D."/>
            <person name="Tsai S.M."/>
            <person name="White F.F."/>
            <person name="Setubal J.C."/>
            <person name="Kitajima J.P."/>
        </authorList>
    </citation>
    <scope>NUCLEOTIDE SEQUENCE [LARGE SCALE GENOMIC DNA]</scope>
    <source>
        <strain>306</strain>
    </source>
</reference>
<protein>
    <recommendedName>
        <fullName evidence="1">Phosphoglycerol transferase I</fullName>
        <ecNumber evidence="1">2.7.8.20</ecNumber>
    </recommendedName>
    <alternativeName>
        <fullName evidence="1">Phosphatidylglycerol--membrane-oligosaccharide glycerophosphotransferase</fullName>
    </alternativeName>
</protein>
<accession>Q8PQA7</accession>
<gene>
    <name evidence="1" type="primary">opgB</name>
    <name type="synonym">mdoB</name>
    <name type="ordered locus">XAC0421</name>
</gene>